<feature type="initiator methionine" description="Removed" evidence="4">
    <location>
        <position position="1"/>
    </location>
</feature>
<feature type="chain" id="PRO_0000155044" description="Probable elongation factor 1-beta/1-delta 2">
    <location>
        <begin position="2"/>
        <end position="263"/>
    </location>
</feature>
<feature type="region of interest" description="Disordered" evidence="3">
    <location>
        <begin position="112"/>
        <end position="153"/>
    </location>
</feature>
<feature type="compositionally biased region" description="Acidic residues" evidence="3">
    <location>
        <begin position="133"/>
        <end position="150"/>
    </location>
</feature>
<feature type="modified residue" description="N-acetylserine" evidence="4">
    <location>
        <position position="2"/>
    </location>
</feature>
<feature type="splice variant" id="VSP_047489" description="In isoform b." evidence="5">
    <original>TSSVAAPAAAPAAAKEEAAGDDDFDLFGSEDEEEDEEKKKVVEERLAAYAAKKATKAGPIAKSSVILDVKPWDDETDLGEMEKLVRSIEMDGLVWGGAKLIPIGYGIKKLQIITVIEDLKVSVDDLIEKITGDFEDHVQSVDIVAFNKI</original>
    <variation>VNHRRHVLILGDGNLSFSLAIASSDPETVYFATVFDSKEQFLKKYNAHDTLNALDALSNVILCFGVDATDLPVRWSNIFNTVIMNFPHPGGKTNLRKSKILLSGIFASLRSIMDSQAVFLLSLAIGQSGLEKVSDPWMNELPSHKKDSWQAIYLGAENGFILDSLERFDTDRFASYRSSGYKETKKGFNNREGLTFSFKKCDNQQKSLRDFQLAEPPRSGKFKFNYYRPFYAQDLSILFKIGESEGEKLAVELVKSIAGNCLAAISEIEYLRSICPDPPLPNRIYRIIWHGLELPMGREMCSRIHEELRNRIAEEIVANNLPLVLT</variation>
    <location>
        <begin position="115"/>
        <end position="263"/>
    </location>
</feature>
<accession>Q9U2H9</accession>
<accession>A3RMU4</accession>
<accession>H9G359</accession>
<accession>H9G360</accession>
<protein>
    <recommendedName>
        <fullName>Probable elongation factor 1-beta/1-delta 2</fullName>
        <shortName>EF-1-beta/delta 2</shortName>
    </recommendedName>
</protein>
<dbReference type="EMBL" id="Z95559">
    <property type="protein sequence ID" value="CAB63360.2"/>
    <property type="molecule type" value="Genomic_DNA"/>
</dbReference>
<dbReference type="EMBL" id="Z95559">
    <property type="protein sequence ID" value="CAM35842.1"/>
    <property type="molecule type" value="Genomic_DNA"/>
</dbReference>
<dbReference type="RefSeq" id="NP_001122811.1">
    <molecule id="Q9U2H9-2"/>
    <property type="nucleotide sequence ID" value="NM_001129339.2"/>
</dbReference>
<dbReference type="RefSeq" id="NP_502816.2">
    <molecule id="Q9U2H9-1"/>
    <property type="nucleotide sequence ID" value="NM_070415.6"/>
</dbReference>
<dbReference type="SMR" id="Q9U2H9"/>
<dbReference type="BioGRID" id="43501">
    <property type="interactions" value="41"/>
</dbReference>
<dbReference type="FunCoup" id="Q9U2H9">
    <property type="interactions" value="222"/>
</dbReference>
<dbReference type="STRING" id="6239.Y41E3.10b.1"/>
<dbReference type="iPTMnet" id="Q9U2H9"/>
<dbReference type="PaxDb" id="6239-Y41E3.10b"/>
<dbReference type="PeptideAtlas" id="Q9U2H9"/>
<dbReference type="EnsemblMetazoa" id="Y41E3.10a.1">
    <molecule id="Q9U2H9-1"/>
    <property type="protein sequence ID" value="Y41E3.10a.1"/>
    <property type="gene ID" value="WBGene00012768"/>
</dbReference>
<dbReference type="EnsemblMetazoa" id="Y41E3.10b.1">
    <molecule id="Q9U2H9-2"/>
    <property type="protein sequence ID" value="Y41E3.10b.1"/>
    <property type="gene ID" value="WBGene00012768"/>
</dbReference>
<dbReference type="GeneID" id="178419"/>
<dbReference type="KEGG" id="cel:CELE_Y41E3.10"/>
<dbReference type="UCSC" id="Y41E3.10a.1">
    <property type="organism name" value="c. elegans"/>
</dbReference>
<dbReference type="AGR" id="WB:WBGene00012768"/>
<dbReference type="CTD" id="178419"/>
<dbReference type="WormBase" id="Y41E3.10a">
    <molecule id="Q9U2H9-1"/>
    <property type="protein sequence ID" value="CE37568"/>
    <property type="gene ID" value="WBGene00012768"/>
    <property type="gene designation" value="eef-1B.2"/>
</dbReference>
<dbReference type="WormBase" id="Y41E3.10b">
    <molecule id="Q9U2H9-2"/>
    <property type="protein sequence ID" value="CE40788"/>
    <property type="gene ID" value="WBGene00012768"/>
    <property type="gene designation" value="eef-1B.2"/>
</dbReference>
<dbReference type="eggNOG" id="KOG1668">
    <property type="taxonomic scope" value="Eukaryota"/>
</dbReference>
<dbReference type="eggNOG" id="KOG4174">
    <property type="taxonomic scope" value="Eukaryota"/>
</dbReference>
<dbReference type="HOGENOM" id="CLU_050172_1_0_1"/>
<dbReference type="InParanoid" id="Q9U2H9"/>
<dbReference type="OMA" id="KCGFIEL"/>
<dbReference type="OrthoDB" id="273345at2759"/>
<dbReference type="PRO" id="PR:Q9U2H9"/>
<dbReference type="Proteomes" id="UP000001940">
    <property type="component" value="Chromosome IV"/>
</dbReference>
<dbReference type="Bgee" id="WBGene00012768">
    <property type="expression patterns" value="Expressed in germ line (C elegans) and 4 other cell types or tissues"/>
</dbReference>
<dbReference type="GO" id="GO:0005829">
    <property type="term" value="C:cytosol"/>
    <property type="evidence" value="ECO:0000318"/>
    <property type="project" value="GO_Central"/>
</dbReference>
<dbReference type="GO" id="GO:0005853">
    <property type="term" value="C:eukaryotic translation elongation factor 1 complex"/>
    <property type="evidence" value="ECO:0007669"/>
    <property type="project" value="InterPro"/>
</dbReference>
<dbReference type="GO" id="GO:0005085">
    <property type="term" value="F:guanyl-nucleotide exchange factor activity"/>
    <property type="evidence" value="ECO:0000318"/>
    <property type="project" value="GO_Central"/>
</dbReference>
<dbReference type="GO" id="GO:0003746">
    <property type="term" value="F:translation elongation factor activity"/>
    <property type="evidence" value="ECO:0007669"/>
    <property type="project" value="UniProtKB-KW"/>
</dbReference>
<dbReference type="GO" id="GO:0006414">
    <property type="term" value="P:translational elongation"/>
    <property type="evidence" value="ECO:0000318"/>
    <property type="project" value="GO_Central"/>
</dbReference>
<dbReference type="CDD" id="cd00292">
    <property type="entry name" value="EF1B"/>
    <property type="match status" value="1"/>
</dbReference>
<dbReference type="FunFam" id="3.30.70.60:FF:000001">
    <property type="entry name" value="Elongation factor 1-beta 1 like"/>
    <property type="match status" value="1"/>
</dbReference>
<dbReference type="Gene3D" id="3.30.70.60">
    <property type="match status" value="1"/>
</dbReference>
<dbReference type="InterPro" id="IPR036219">
    <property type="entry name" value="eEF-1beta-like_sf"/>
</dbReference>
<dbReference type="InterPro" id="IPR018940">
    <property type="entry name" value="EF-1_beta_acid_region_euk"/>
</dbReference>
<dbReference type="InterPro" id="IPR049720">
    <property type="entry name" value="EF1B_bsu/dsu"/>
</dbReference>
<dbReference type="InterPro" id="IPR014038">
    <property type="entry name" value="EF1B_bsu/dsu_GNE"/>
</dbReference>
<dbReference type="InterPro" id="IPR014717">
    <property type="entry name" value="Transl_elong_EF1B/ribsomal_bS6"/>
</dbReference>
<dbReference type="InterPro" id="IPR001326">
    <property type="entry name" value="Transl_elong_EF1B_B/D_CS"/>
</dbReference>
<dbReference type="PANTHER" id="PTHR11595">
    <property type="entry name" value="EF-HAND AND COILED-COIL DOMAIN-CONTAINING FAMILY MEMBER"/>
    <property type="match status" value="1"/>
</dbReference>
<dbReference type="PANTHER" id="PTHR11595:SF19">
    <property type="entry name" value="ELONGATION FACTOR 1-BETA_1-DELTA 2-RELATED"/>
    <property type="match status" value="1"/>
</dbReference>
<dbReference type="Pfam" id="PF10587">
    <property type="entry name" value="EF-1_beta_acid"/>
    <property type="match status" value="1"/>
</dbReference>
<dbReference type="Pfam" id="PF00736">
    <property type="entry name" value="EF1_GNE"/>
    <property type="match status" value="1"/>
</dbReference>
<dbReference type="SMART" id="SM01182">
    <property type="entry name" value="EF-1_beta_acid"/>
    <property type="match status" value="1"/>
</dbReference>
<dbReference type="SMART" id="SM00888">
    <property type="entry name" value="EF1_GNE"/>
    <property type="match status" value="1"/>
</dbReference>
<dbReference type="SUPFAM" id="SSF54984">
    <property type="entry name" value="eEF-1beta-like"/>
    <property type="match status" value="1"/>
</dbReference>
<dbReference type="PROSITE" id="PS00824">
    <property type="entry name" value="EF1BD_1"/>
    <property type="match status" value="1"/>
</dbReference>
<dbReference type="PROSITE" id="PS00825">
    <property type="entry name" value="EF1BD_2"/>
    <property type="match status" value="1"/>
</dbReference>
<gene>
    <name evidence="7" type="primary">eef-1B.2</name>
    <name evidence="7" type="ORF">Y41E3.10</name>
</gene>
<sequence length="263" mass="28173">MSVEGLLSEVKHFNAHHLDAALGEQLFYGGKRVFSDVKPGTSSGGDHGCKGGKSELKGAIHNAKHAADKALNKEGGEDVSKLREEHSALAKKVDDLASLVAELQLQLSTLRQGQTSSVAAPAAAPAAAKEEAAGDDDFDLFGSEDEEEDEEKKKVVEERLAAYAAKKATKAGPIAKSSVILDVKPWDDETDLGEMEKLVRSIEMDGLVWGGAKLIPIGYGIKKLQIITVIEDLKVSVDDLIEKITGDFEDHVQSVDIVAFNKI</sequence>
<comment type="function">
    <text evidence="2">EF-1-beta and EF-1-delta stimulate the exchange of GDP bound to EF-1-alpha to GTP.</text>
</comment>
<comment type="subunit">
    <text evidence="1">EF-1 is composed of 4 subunits: alpha, beta, delta, and gamma.</text>
</comment>
<comment type="alternative products">
    <event type="alternative splicing"/>
    <isoform>
        <id>Q9U2H9-1</id>
        <name evidence="7">a</name>
        <sequence type="displayed"/>
    </isoform>
    <isoform>
        <id>Q9U2H9-2</id>
        <name evidence="8">b</name>
        <sequence type="described" ref="VSP_047489"/>
    </isoform>
</comment>
<comment type="similarity">
    <text evidence="5">Belongs to the EF-1-beta/EF-1-delta family.</text>
</comment>
<name>EF1B2_CAEEL</name>
<organism>
    <name type="scientific">Caenorhabditis elegans</name>
    <dbReference type="NCBI Taxonomy" id="6239"/>
    <lineage>
        <taxon>Eukaryota</taxon>
        <taxon>Metazoa</taxon>
        <taxon>Ecdysozoa</taxon>
        <taxon>Nematoda</taxon>
        <taxon>Chromadorea</taxon>
        <taxon>Rhabditida</taxon>
        <taxon>Rhabditina</taxon>
        <taxon>Rhabditomorpha</taxon>
        <taxon>Rhabditoidea</taxon>
        <taxon>Rhabditidae</taxon>
        <taxon>Peloderinae</taxon>
        <taxon>Caenorhabditis</taxon>
    </lineage>
</organism>
<proteinExistence type="evidence at protein level"/>
<evidence type="ECO:0000250" key="1"/>
<evidence type="ECO:0000250" key="2">
    <source>
        <dbReference type="UniProtKB" id="P34460"/>
    </source>
</evidence>
<evidence type="ECO:0000256" key="3">
    <source>
        <dbReference type="SAM" id="MobiDB-lite"/>
    </source>
</evidence>
<evidence type="ECO:0000269" key="4">
    <source ref="2"/>
</evidence>
<evidence type="ECO:0000305" key="5"/>
<evidence type="ECO:0000312" key="6">
    <source>
        <dbReference type="EMBL" id="CAB63360.2"/>
    </source>
</evidence>
<evidence type="ECO:0000312" key="7">
    <source>
        <dbReference type="WormBase" id="Y41E3.10a"/>
    </source>
</evidence>
<evidence type="ECO:0000312" key="8">
    <source>
        <dbReference type="WormBase" id="Y41E3.10b"/>
    </source>
</evidence>
<keyword id="KW-0007">Acetylation</keyword>
<keyword id="KW-0025">Alternative splicing</keyword>
<keyword id="KW-0903">Direct protein sequencing</keyword>
<keyword id="KW-0251">Elongation factor</keyword>
<keyword id="KW-0648">Protein biosynthesis</keyword>
<keyword id="KW-1185">Reference proteome</keyword>
<reference evidence="6" key="1">
    <citation type="journal article" date="1998" name="Science">
        <title>Genome sequence of the nematode C. elegans: a platform for investigating biology.</title>
        <authorList>
            <consortium name="The C. elegans sequencing consortium"/>
        </authorList>
    </citation>
    <scope>NUCLEOTIDE SEQUENCE [LARGE SCALE GENOMIC DNA]</scope>
    <source>
        <strain>Bristol N2</strain>
    </source>
</reference>
<reference evidence="5 6" key="2">
    <citation type="submission" date="2006-04" db="UniProtKB">
        <authorList>
            <person name="Bienvenut W.V."/>
        </authorList>
    </citation>
    <scope>PROTEIN SEQUENCE OF 2-11; 177-197; 201-222 AND 235-243</scope>
    <scope>ACETYLATION AT SER-2</scope>
    <scope>IDENTIFICATION BY MASS SPECTROMETRY</scope>
</reference>